<gene>
    <name evidence="1" type="primary">aroB</name>
    <name type="ordered locus">YpsIP31758_3965</name>
</gene>
<organism>
    <name type="scientific">Yersinia pseudotuberculosis serotype O:1b (strain IP 31758)</name>
    <dbReference type="NCBI Taxonomy" id="349747"/>
    <lineage>
        <taxon>Bacteria</taxon>
        <taxon>Pseudomonadati</taxon>
        <taxon>Pseudomonadota</taxon>
        <taxon>Gammaproteobacteria</taxon>
        <taxon>Enterobacterales</taxon>
        <taxon>Yersiniaceae</taxon>
        <taxon>Yersinia</taxon>
    </lineage>
</organism>
<name>AROB_YERP3</name>
<keyword id="KW-0028">Amino-acid biosynthesis</keyword>
<keyword id="KW-0057">Aromatic amino acid biosynthesis</keyword>
<keyword id="KW-0170">Cobalt</keyword>
<keyword id="KW-0963">Cytoplasm</keyword>
<keyword id="KW-0456">Lyase</keyword>
<keyword id="KW-0479">Metal-binding</keyword>
<keyword id="KW-0520">NAD</keyword>
<keyword id="KW-0547">Nucleotide-binding</keyword>
<keyword id="KW-0862">Zinc</keyword>
<accession>A7FNT5</accession>
<proteinExistence type="inferred from homology"/>
<evidence type="ECO:0000255" key="1">
    <source>
        <dbReference type="HAMAP-Rule" id="MF_00110"/>
    </source>
</evidence>
<sequence length="362" mass="38837">MEKITVTLGERSYPITIAAGLFNDPASFKPLKAGDQVMLVTNQTLAPLYLDSLRAVLEHGGIKVDQVILPDGEQYKSLSVMEQVFSALLEKPHGRDTTLVALGGGVVGDLTGFAAACYQRGVRFIQVPTTLLSQVDSSVGGKTAVNHPLGKNMIGAFYQPASVVVDLNCLKTLPPRELASGLAEVIKYGIILDAAFFDWLENNIDALLALDMSALAYCIRRCCELKADVVAADEREESGARALLNLGHTYGHAIEAEMGYGVWLHGEAVAAGMVMAAQTSRRLGQLSVSDVERIKKLLLRAGLPVCGPKEMAPESYLPHMMRDKKVLAGELRLVLPTAIGKSEIRGGVAHDMVLASIADCRP</sequence>
<reference key="1">
    <citation type="journal article" date="2007" name="PLoS Genet.">
        <title>The complete genome sequence of Yersinia pseudotuberculosis IP31758, the causative agent of Far East scarlet-like fever.</title>
        <authorList>
            <person name="Eppinger M."/>
            <person name="Rosovitz M.J."/>
            <person name="Fricke W.F."/>
            <person name="Rasko D.A."/>
            <person name="Kokorina G."/>
            <person name="Fayolle C."/>
            <person name="Lindler L.E."/>
            <person name="Carniel E."/>
            <person name="Ravel J."/>
        </authorList>
    </citation>
    <scope>NUCLEOTIDE SEQUENCE [LARGE SCALE GENOMIC DNA]</scope>
    <source>
        <strain>IP 31758</strain>
    </source>
</reference>
<comment type="function">
    <text evidence="1">Catalyzes the conversion of 3-deoxy-D-arabino-heptulosonate 7-phosphate (DAHP) to dehydroquinate (DHQ).</text>
</comment>
<comment type="catalytic activity">
    <reaction evidence="1">
        <text>7-phospho-2-dehydro-3-deoxy-D-arabino-heptonate = 3-dehydroquinate + phosphate</text>
        <dbReference type="Rhea" id="RHEA:21968"/>
        <dbReference type="ChEBI" id="CHEBI:32364"/>
        <dbReference type="ChEBI" id="CHEBI:43474"/>
        <dbReference type="ChEBI" id="CHEBI:58394"/>
        <dbReference type="EC" id="4.2.3.4"/>
    </reaction>
</comment>
<comment type="cofactor">
    <cofactor evidence="1">
        <name>Co(2+)</name>
        <dbReference type="ChEBI" id="CHEBI:48828"/>
    </cofactor>
    <cofactor evidence="1">
        <name>Zn(2+)</name>
        <dbReference type="ChEBI" id="CHEBI:29105"/>
    </cofactor>
    <text evidence="1">Binds 1 divalent metal cation per subunit. Can use either Co(2+) or Zn(2+).</text>
</comment>
<comment type="cofactor">
    <cofactor evidence="1">
        <name>NAD(+)</name>
        <dbReference type="ChEBI" id="CHEBI:57540"/>
    </cofactor>
</comment>
<comment type="pathway">
    <text evidence="1">Metabolic intermediate biosynthesis; chorismate biosynthesis; chorismate from D-erythrose 4-phosphate and phosphoenolpyruvate: step 2/7.</text>
</comment>
<comment type="subcellular location">
    <subcellularLocation>
        <location evidence="1">Cytoplasm</location>
    </subcellularLocation>
</comment>
<comment type="similarity">
    <text evidence="1">Belongs to the sugar phosphate cyclases superfamily. Dehydroquinate synthase family.</text>
</comment>
<dbReference type="EC" id="4.2.3.4" evidence="1"/>
<dbReference type="EMBL" id="CP000720">
    <property type="protein sequence ID" value="ABS48247.1"/>
    <property type="molecule type" value="Genomic_DNA"/>
</dbReference>
<dbReference type="RefSeq" id="WP_002208898.1">
    <property type="nucleotide sequence ID" value="NC_009708.1"/>
</dbReference>
<dbReference type="SMR" id="A7FNT5"/>
<dbReference type="GeneID" id="57974449"/>
<dbReference type="KEGG" id="ypi:YpsIP31758_3965"/>
<dbReference type="HOGENOM" id="CLU_001201_0_2_6"/>
<dbReference type="UniPathway" id="UPA00053">
    <property type="reaction ID" value="UER00085"/>
</dbReference>
<dbReference type="Proteomes" id="UP000002412">
    <property type="component" value="Chromosome"/>
</dbReference>
<dbReference type="GO" id="GO:0005737">
    <property type="term" value="C:cytoplasm"/>
    <property type="evidence" value="ECO:0007669"/>
    <property type="project" value="UniProtKB-SubCell"/>
</dbReference>
<dbReference type="GO" id="GO:0003856">
    <property type="term" value="F:3-dehydroquinate synthase activity"/>
    <property type="evidence" value="ECO:0007669"/>
    <property type="project" value="UniProtKB-UniRule"/>
</dbReference>
<dbReference type="GO" id="GO:0046872">
    <property type="term" value="F:metal ion binding"/>
    <property type="evidence" value="ECO:0007669"/>
    <property type="project" value="UniProtKB-KW"/>
</dbReference>
<dbReference type="GO" id="GO:0000166">
    <property type="term" value="F:nucleotide binding"/>
    <property type="evidence" value="ECO:0007669"/>
    <property type="project" value="UniProtKB-KW"/>
</dbReference>
<dbReference type="GO" id="GO:0008652">
    <property type="term" value="P:amino acid biosynthetic process"/>
    <property type="evidence" value="ECO:0007669"/>
    <property type="project" value="UniProtKB-KW"/>
</dbReference>
<dbReference type="GO" id="GO:0009073">
    <property type="term" value="P:aromatic amino acid family biosynthetic process"/>
    <property type="evidence" value="ECO:0007669"/>
    <property type="project" value="UniProtKB-KW"/>
</dbReference>
<dbReference type="GO" id="GO:0009423">
    <property type="term" value="P:chorismate biosynthetic process"/>
    <property type="evidence" value="ECO:0007669"/>
    <property type="project" value="UniProtKB-UniRule"/>
</dbReference>
<dbReference type="CDD" id="cd08195">
    <property type="entry name" value="DHQS"/>
    <property type="match status" value="1"/>
</dbReference>
<dbReference type="FunFam" id="1.20.1090.10:FF:000002">
    <property type="entry name" value="3-dehydroquinate synthase"/>
    <property type="match status" value="1"/>
</dbReference>
<dbReference type="FunFam" id="3.40.50.1970:FF:000001">
    <property type="entry name" value="3-dehydroquinate synthase"/>
    <property type="match status" value="1"/>
</dbReference>
<dbReference type="Gene3D" id="3.40.50.1970">
    <property type="match status" value="1"/>
</dbReference>
<dbReference type="Gene3D" id="1.20.1090.10">
    <property type="entry name" value="Dehydroquinate synthase-like - alpha domain"/>
    <property type="match status" value="1"/>
</dbReference>
<dbReference type="HAMAP" id="MF_00110">
    <property type="entry name" value="DHQ_synthase"/>
    <property type="match status" value="1"/>
</dbReference>
<dbReference type="InterPro" id="IPR050071">
    <property type="entry name" value="Dehydroquinate_synthase"/>
</dbReference>
<dbReference type="InterPro" id="IPR016037">
    <property type="entry name" value="DHQ_synth_AroB"/>
</dbReference>
<dbReference type="InterPro" id="IPR030963">
    <property type="entry name" value="DHQ_synth_fam"/>
</dbReference>
<dbReference type="InterPro" id="IPR030960">
    <property type="entry name" value="DHQS/DOIS_N"/>
</dbReference>
<dbReference type="InterPro" id="IPR056179">
    <property type="entry name" value="DHQS_C"/>
</dbReference>
<dbReference type="NCBIfam" id="TIGR01357">
    <property type="entry name" value="aroB"/>
    <property type="match status" value="1"/>
</dbReference>
<dbReference type="PANTHER" id="PTHR43622">
    <property type="entry name" value="3-DEHYDROQUINATE SYNTHASE"/>
    <property type="match status" value="1"/>
</dbReference>
<dbReference type="PANTHER" id="PTHR43622:SF7">
    <property type="entry name" value="3-DEHYDROQUINATE SYNTHASE, CHLOROPLASTIC"/>
    <property type="match status" value="1"/>
</dbReference>
<dbReference type="Pfam" id="PF01761">
    <property type="entry name" value="DHQ_synthase"/>
    <property type="match status" value="1"/>
</dbReference>
<dbReference type="Pfam" id="PF24621">
    <property type="entry name" value="DHQS_C"/>
    <property type="match status" value="1"/>
</dbReference>
<dbReference type="PIRSF" id="PIRSF001455">
    <property type="entry name" value="DHQ_synth"/>
    <property type="match status" value="1"/>
</dbReference>
<dbReference type="SUPFAM" id="SSF56796">
    <property type="entry name" value="Dehydroquinate synthase-like"/>
    <property type="match status" value="1"/>
</dbReference>
<feature type="chain" id="PRO_1000094658" description="3-dehydroquinate synthase">
    <location>
        <begin position="1"/>
        <end position="362"/>
    </location>
</feature>
<feature type="binding site" evidence="1">
    <location>
        <begin position="71"/>
        <end position="76"/>
    </location>
    <ligand>
        <name>NAD(+)</name>
        <dbReference type="ChEBI" id="CHEBI:57540"/>
    </ligand>
</feature>
<feature type="binding site" evidence="1">
    <location>
        <begin position="105"/>
        <end position="109"/>
    </location>
    <ligand>
        <name>NAD(+)</name>
        <dbReference type="ChEBI" id="CHEBI:57540"/>
    </ligand>
</feature>
<feature type="binding site" evidence="1">
    <location>
        <begin position="129"/>
        <end position="130"/>
    </location>
    <ligand>
        <name>NAD(+)</name>
        <dbReference type="ChEBI" id="CHEBI:57540"/>
    </ligand>
</feature>
<feature type="binding site" evidence="1">
    <location>
        <position position="142"/>
    </location>
    <ligand>
        <name>NAD(+)</name>
        <dbReference type="ChEBI" id="CHEBI:57540"/>
    </ligand>
</feature>
<feature type="binding site" evidence="1">
    <location>
        <position position="151"/>
    </location>
    <ligand>
        <name>NAD(+)</name>
        <dbReference type="ChEBI" id="CHEBI:57540"/>
    </ligand>
</feature>
<feature type="binding site" evidence="1">
    <location>
        <begin position="169"/>
        <end position="172"/>
    </location>
    <ligand>
        <name>NAD(+)</name>
        <dbReference type="ChEBI" id="CHEBI:57540"/>
    </ligand>
</feature>
<feature type="binding site" evidence="1">
    <location>
        <position position="184"/>
    </location>
    <ligand>
        <name>Zn(2+)</name>
        <dbReference type="ChEBI" id="CHEBI:29105"/>
    </ligand>
</feature>
<feature type="binding site" evidence="1">
    <location>
        <position position="248"/>
    </location>
    <ligand>
        <name>Zn(2+)</name>
        <dbReference type="ChEBI" id="CHEBI:29105"/>
    </ligand>
</feature>
<feature type="binding site" evidence="1">
    <location>
        <position position="265"/>
    </location>
    <ligand>
        <name>Zn(2+)</name>
        <dbReference type="ChEBI" id="CHEBI:29105"/>
    </ligand>
</feature>
<protein>
    <recommendedName>
        <fullName evidence="1">3-dehydroquinate synthase</fullName>
        <shortName evidence="1">DHQS</shortName>
        <ecNumber evidence="1">4.2.3.4</ecNumber>
    </recommendedName>
</protein>